<comment type="function">
    <text evidence="6 7 8">Polygalacturonase required for cell type-specific pectin degradation to separate microspores. Involved in anther dehiscence and floral organ abscission.</text>
</comment>
<comment type="catalytic activity">
    <reaction>
        <text>(1,4-alpha-D-galacturonosyl)n+m + H2O = (1,4-alpha-D-galacturonosyl)n + (1,4-alpha-D-galacturonosyl)m.</text>
        <dbReference type="EC" id="3.2.1.15"/>
    </reaction>
</comment>
<comment type="subcellular location">
    <subcellularLocation>
        <location evidence="1">Secreted</location>
        <location evidence="1">Cell wall</location>
    </subcellularLocation>
</comment>
<comment type="tissue specificity">
    <text evidence="5 6 7 9">Expressed predominantly in roots with lower expression levels in rosette leaves, flower buds and siliques. Bearly detected in seeds. Found in flowers undergoing floral organ abscission. Also expressed early in anther development, at the time of microspore separation.</text>
</comment>
<comment type="disruption phenotype">
    <text evidence="7 9">The mature pollen grains are arranged in a tetrad. No visible phenotype regarding floral organ abscission.</text>
</comment>
<comment type="similarity">
    <text evidence="10">Belongs to the glycosyl hydrolase 28 family.</text>
</comment>
<comment type="sequence caution" evidence="10">
    <conflict type="erroneous gene model prediction">
        <sequence resource="EMBL-CDS" id="AAF21207"/>
    </conflict>
</comment>
<reference key="1">
    <citation type="journal article" date="2000" name="Nature">
        <title>Sequence and analysis of chromosome 3 of the plant Arabidopsis thaliana.</title>
        <authorList>
            <person name="Salanoubat M."/>
            <person name="Lemcke K."/>
            <person name="Rieger M."/>
            <person name="Ansorge W."/>
            <person name="Unseld M."/>
            <person name="Fartmann B."/>
            <person name="Valle G."/>
            <person name="Bloecker H."/>
            <person name="Perez-Alonso M."/>
            <person name="Obermaier B."/>
            <person name="Delseny M."/>
            <person name="Boutry M."/>
            <person name="Grivell L.A."/>
            <person name="Mache R."/>
            <person name="Puigdomenech P."/>
            <person name="De Simone V."/>
            <person name="Choisne N."/>
            <person name="Artiguenave F."/>
            <person name="Robert C."/>
            <person name="Brottier P."/>
            <person name="Wincker P."/>
            <person name="Cattolico L."/>
            <person name="Weissenbach J."/>
            <person name="Saurin W."/>
            <person name="Quetier F."/>
            <person name="Schaefer M."/>
            <person name="Mueller-Auer S."/>
            <person name="Gabel C."/>
            <person name="Fuchs M."/>
            <person name="Benes V."/>
            <person name="Wurmbach E."/>
            <person name="Drzonek H."/>
            <person name="Erfle H."/>
            <person name="Jordan N."/>
            <person name="Bangert S."/>
            <person name="Wiedelmann R."/>
            <person name="Kranz H."/>
            <person name="Voss H."/>
            <person name="Holland R."/>
            <person name="Brandt P."/>
            <person name="Nyakatura G."/>
            <person name="Vezzi A."/>
            <person name="D'Angelo M."/>
            <person name="Pallavicini A."/>
            <person name="Toppo S."/>
            <person name="Simionati B."/>
            <person name="Conrad A."/>
            <person name="Hornischer K."/>
            <person name="Kauer G."/>
            <person name="Loehnert T.-H."/>
            <person name="Nordsiek G."/>
            <person name="Reichelt J."/>
            <person name="Scharfe M."/>
            <person name="Schoen O."/>
            <person name="Bargues M."/>
            <person name="Terol J."/>
            <person name="Climent J."/>
            <person name="Navarro P."/>
            <person name="Collado C."/>
            <person name="Perez-Perez A."/>
            <person name="Ottenwaelder B."/>
            <person name="Duchemin D."/>
            <person name="Cooke R."/>
            <person name="Laudie M."/>
            <person name="Berger-Llauro C."/>
            <person name="Purnelle B."/>
            <person name="Masuy D."/>
            <person name="de Haan M."/>
            <person name="Maarse A.C."/>
            <person name="Alcaraz J.-P."/>
            <person name="Cottet A."/>
            <person name="Casacuberta E."/>
            <person name="Monfort A."/>
            <person name="Argiriou A."/>
            <person name="Flores M."/>
            <person name="Liguori R."/>
            <person name="Vitale D."/>
            <person name="Mannhaupt G."/>
            <person name="Haase D."/>
            <person name="Schoof H."/>
            <person name="Rudd S."/>
            <person name="Zaccaria P."/>
            <person name="Mewes H.-W."/>
            <person name="Mayer K.F.X."/>
            <person name="Kaul S."/>
            <person name="Town C.D."/>
            <person name="Koo H.L."/>
            <person name="Tallon L.J."/>
            <person name="Jenkins J."/>
            <person name="Rooney T."/>
            <person name="Rizzo M."/>
            <person name="Walts A."/>
            <person name="Utterback T."/>
            <person name="Fujii C.Y."/>
            <person name="Shea T.P."/>
            <person name="Creasy T.H."/>
            <person name="Haas B."/>
            <person name="Maiti R."/>
            <person name="Wu D."/>
            <person name="Peterson J."/>
            <person name="Van Aken S."/>
            <person name="Pai G."/>
            <person name="Militscher J."/>
            <person name="Sellers P."/>
            <person name="Gill J.E."/>
            <person name="Feldblyum T.V."/>
            <person name="Preuss D."/>
            <person name="Lin X."/>
            <person name="Nierman W.C."/>
            <person name="Salzberg S.L."/>
            <person name="White O."/>
            <person name="Venter J.C."/>
            <person name="Fraser C.M."/>
            <person name="Kaneko T."/>
            <person name="Nakamura Y."/>
            <person name="Sato S."/>
            <person name="Kato T."/>
            <person name="Asamizu E."/>
            <person name="Sasamoto S."/>
            <person name="Kimura T."/>
            <person name="Idesawa K."/>
            <person name="Kawashima K."/>
            <person name="Kishida Y."/>
            <person name="Kiyokawa C."/>
            <person name="Kohara M."/>
            <person name="Matsumoto M."/>
            <person name="Matsuno A."/>
            <person name="Muraki A."/>
            <person name="Nakayama S."/>
            <person name="Nakazaki N."/>
            <person name="Shinpo S."/>
            <person name="Takeuchi C."/>
            <person name="Wada T."/>
            <person name="Watanabe A."/>
            <person name="Yamada M."/>
            <person name="Yasuda M."/>
            <person name="Tabata S."/>
        </authorList>
    </citation>
    <scope>NUCLEOTIDE SEQUENCE [LARGE SCALE GENOMIC DNA]</scope>
    <source>
        <strain>cv. Columbia</strain>
    </source>
</reference>
<reference key="2">
    <citation type="journal article" date="2017" name="Plant J.">
        <title>Araport11: a complete reannotation of the Arabidopsis thaliana reference genome.</title>
        <authorList>
            <person name="Cheng C.Y."/>
            <person name="Krishnakumar V."/>
            <person name="Chan A.P."/>
            <person name="Thibaud-Nissen F."/>
            <person name="Schobel S."/>
            <person name="Town C.D."/>
        </authorList>
    </citation>
    <scope>GENOME REANNOTATION</scope>
    <source>
        <strain>cv. Columbia</strain>
    </source>
</reference>
<reference key="3">
    <citation type="journal article" date="1994" name="Science">
        <title>Tetrad analysis possible in Arabidopsis with mutation of the QUARTET (QRT) genes.</title>
        <authorList>
            <person name="Preuss D."/>
            <person name="Rhee S.Y."/>
            <person name="Davis R.W."/>
        </authorList>
    </citation>
    <scope>FUNCTION</scope>
    <scope>MUTAGENESIS OF VAL-372</scope>
</reference>
<reference key="4">
    <citation type="journal article" date="2006" name="Plant Signal. Behav.">
        <title>Expression divergence and functional redundancy of polygalacturonases in floral organ abscission.</title>
        <authorList>
            <person name="Kim J."/>
            <person name="Patterson S.E."/>
        </authorList>
    </citation>
    <scope>TISSUE SPECIFICITY</scope>
    <scope>DISRUPTION PHENOTYPE</scope>
</reference>
<reference key="5">
    <citation type="journal article" date="2006" name="Genome Biol.">
        <title>Patterns of expansion and expression divergence in the plant polygalacturonase gene family.</title>
        <authorList>
            <person name="Kim J."/>
            <person name="Shiu S.-H."/>
            <person name="Thoma S."/>
            <person name="Li W.-H."/>
            <person name="Patterson S.E."/>
        </authorList>
    </citation>
    <scope>TISSUE SPECIFICITY</scope>
</reference>
<reference key="6">
    <citation type="journal article" date="2007" name="J. Exp. Bot.">
        <title>Expression of polygalacturonases and evidence to support their role during cell separation processes in Arabidopsis thaliana.</title>
        <authorList>
            <person name="Gonzalez-Carranza Z.H."/>
            <person name="Elliott K.A."/>
            <person name="Roberts J.A."/>
        </authorList>
    </citation>
    <scope>FUNCTION</scope>
    <scope>TISSUE SPECIFICITY</scope>
</reference>
<reference key="7">
    <citation type="journal article" date="2009" name="Plant Cell">
        <title>ARABIDOPSIS DEHISCENCE ZONE POLYGALACTURONASE1 (ADPG1), ADPG2, and QUARTET2 are polygalacturonases required for cell separation during reproductive development in Arabidopsis.</title>
        <authorList>
            <person name="Ogawa M."/>
            <person name="Kay P."/>
            <person name="Wilson S."/>
            <person name="Swain S.M."/>
        </authorList>
    </citation>
    <scope>FUNCTION</scope>
    <scope>TISSUE SPECIFICITY</scope>
    <scope>DISRUPTION PHENOTYPE</scope>
</reference>
<gene>
    <name type="primary">QRT2</name>
    <name type="ordered locus">At3g07970</name>
    <name type="ORF">F17A17.31</name>
</gene>
<keyword id="KW-0134">Cell wall</keyword>
<keyword id="KW-0961">Cell wall biogenesis/degradation</keyword>
<keyword id="KW-0326">Glycosidase</keyword>
<keyword id="KW-0378">Hydrolase</keyword>
<keyword id="KW-1185">Reference proteome</keyword>
<keyword id="KW-0677">Repeat</keyword>
<keyword id="KW-0964">Secreted</keyword>
<keyword id="KW-0732">Signal</keyword>
<proteinExistence type="evidence at protein level"/>
<protein>
    <recommendedName>
        <fullName>Polygalacturonase QRT2</fullName>
        <shortName>AtQRT2</shortName>
        <shortName>PG QRT2</shortName>
        <ecNumber>3.2.1.15</ecNumber>
    </recommendedName>
    <alternativeName>
        <fullName>Pectinase QRT2</fullName>
    </alternativeName>
    <alternativeName>
        <fullName>Protein QUARTET 2</fullName>
    </alternativeName>
</protein>
<feature type="signal peptide" evidence="2">
    <location>
        <begin position="1"/>
        <end position="21"/>
    </location>
</feature>
<feature type="chain" id="PRO_0000367915" description="Polygalacturonase QRT2">
    <location>
        <begin position="22"/>
        <end position="439"/>
    </location>
</feature>
<feature type="repeat" description="PbH1 1">
    <location>
        <begin position="201"/>
        <end position="250"/>
    </location>
</feature>
<feature type="repeat" description="PbH1 2">
    <location>
        <begin position="251"/>
        <end position="272"/>
    </location>
</feature>
<feature type="repeat" description="PbH1 3">
    <location>
        <begin position="304"/>
        <end position="325"/>
    </location>
</feature>
<feature type="repeat" description="PbH1 4">
    <location>
        <begin position="333"/>
        <end position="354"/>
    </location>
</feature>
<feature type="region of interest" description="Disordered" evidence="4">
    <location>
        <begin position="43"/>
        <end position="69"/>
    </location>
</feature>
<feature type="compositionally biased region" description="Basic residues" evidence="4">
    <location>
        <begin position="44"/>
        <end position="62"/>
    </location>
</feature>
<feature type="active site" description="Proton donor" evidence="3">
    <location>
        <position position="265"/>
    </location>
</feature>
<feature type="active site" evidence="3">
    <location>
        <position position="288"/>
    </location>
</feature>
<feature type="mutagenesis site" description="In qrt2-1; loss of function." evidence="8">
    <original>V</original>
    <variation>A</variation>
    <location>
        <position position="372"/>
    </location>
</feature>
<evidence type="ECO:0000250" key="1"/>
<evidence type="ECO:0000255" key="2"/>
<evidence type="ECO:0000255" key="3">
    <source>
        <dbReference type="PROSITE-ProRule" id="PRU10052"/>
    </source>
</evidence>
<evidence type="ECO:0000256" key="4">
    <source>
        <dbReference type="SAM" id="MobiDB-lite"/>
    </source>
</evidence>
<evidence type="ECO:0000269" key="5">
    <source>
    </source>
</evidence>
<evidence type="ECO:0000269" key="6">
    <source>
    </source>
</evidence>
<evidence type="ECO:0000269" key="7">
    <source>
    </source>
</evidence>
<evidence type="ECO:0000269" key="8">
    <source>
    </source>
</evidence>
<evidence type="ECO:0000269" key="9">
    <source ref="4"/>
</evidence>
<evidence type="ECO:0000305" key="10"/>
<organism>
    <name type="scientific">Arabidopsis thaliana</name>
    <name type="common">Mouse-ear cress</name>
    <dbReference type="NCBI Taxonomy" id="3702"/>
    <lineage>
        <taxon>Eukaryota</taxon>
        <taxon>Viridiplantae</taxon>
        <taxon>Streptophyta</taxon>
        <taxon>Embryophyta</taxon>
        <taxon>Tracheophyta</taxon>
        <taxon>Spermatophyta</taxon>
        <taxon>Magnoliopsida</taxon>
        <taxon>eudicotyledons</taxon>
        <taxon>Gunneridae</taxon>
        <taxon>Pentapetalae</taxon>
        <taxon>rosids</taxon>
        <taxon>malvids</taxon>
        <taxon>Brassicales</taxon>
        <taxon>Brassicaceae</taxon>
        <taxon>Camelineae</taxon>
        <taxon>Arabidopsis</taxon>
    </lineage>
</organism>
<sequence length="439" mass="48572">MYEKIIILSVFLLTFLPSCFSSYPFNHRDDLFMSSNVYYETNRQHQHGHNTRNSHLKNRHGYAPRSSPRSFNVNTFGAKANGNDDSKAFMKAWEAACSSTGIVYIVAPKNRDYMLKAVTFSGPCKSSLIIFKIYGRIEAWENPSDYKERRHWIVFENVNNLRVEGGGRIDGNGHIWWPKSCKINPQLPCLGAPTAVTFVECNNLRVSNIRLENAQQMHLTFQDCKNVKALNLMVTSPADSPNTDGIHVSGTQNILIQDSIVRTGDDCISIVSGSENVRATGITCGPGHGISIGSLGEDNSEAYVSNVVVNKATLIGTTNGVRIKTWQGGHGMAKNIIFQDIIMKNVTNPIIINQDYCDRVEACPEQKSAVQVSNVLYKNIQGTSSRPIAVKFVCSKNIPCRGISMQNVKLVDQTQQDVSKASCSNVKLDTRGNVSPLCT</sequence>
<accession>Q9SFB7</accession>
<dbReference type="EC" id="3.2.1.15"/>
<dbReference type="EMBL" id="AC013483">
    <property type="protein sequence ID" value="AAF21207.1"/>
    <property type="status" value="ALT_SEQ"/>
    <property type="molecule type" value="Genomic_DNA"/>
</dbReference>
<dbReference type="EMBL" id="CP002686">
    <property type="protein sequence ID" value="AEE74626.1"/>
    <property type="molecule type" value="Genomic_DNA"/>
</dbReference>
<dbReference type="RefSeq" id="NP_187454.2">
    <property type="nucleotide sequence ID" value="NM_111676.4"/>
</dbReference>
<dbReference type="SMR" id="Q9SFB7"/>
<dbReference type="FunCoup" id="Q9SFB7">
    <property type="interactions" value="138"/>
</dbReference>
<dbReference type="STRING" id="3702.Q9SFB7"/>
<dbReference type="CAZy" id="GH28">
    <property type="family name" value="Glycoside Hydrolase Family 28"/>
</dbReference>
<dbReference type="PaxDb" id="3702-AT3G07970.1"/>
<dbReference type="ProteomicsDB" id="225934"/>
<dbReference type="EnsemblPlants" id="AT3G07970.1">
    <property type="protein sequence ID" value="AT3G07970.1"/>
    <property type="gene ID" value="AT3G07970"/>
</dbReference>
<dbReference type="GeneID" id="819988"/>
<dbReference type="Gramene" id="AT3G07970.1">
    <property type="protein sequence ID" value="AT3G07970.1"/>
    <property type="gene ID" value="AT3G07970"/>
</dbReference>
<dbReference type="KEGG" id="ath:AT3G07970"/>
<dbReference type="Araport" id="AT3G07970"/>
<dbReference type="TAIR" id="AT3G07970">
    <property type="gene designation" value="QRT2"/>
</dbReference>
<dbReference type="eggNOG" id="ENOG502QRJW">
    <property type="taxonomic scope" value="Eukaryota"/>
</dbReference>
<dbReference type="HOGENOM" id="CLU_016031_2_3_1"/>
<dbReference type="InParanoid" id="Q9SFB7"/>
<dbReference type="OMA" id="FKDAQQM"/>
<dbReference type="PhylomeDB" id="Q9SFB7"/>
<dbReference type="BioCyc" id="ARA:AT3G07970-MONOMER"/>
<dbReference type="PRO" id="PR:Q9SFB7"/>
<dbReference type="Proteomes" id="UP000006548">
    <property type="component" value="Chromosome 3"/>
</dbReference>
<dbReference type="ExpressionAtlas" id="Q9SFB7">
    <property type="expression patterns" value="baseline and differential"/>
</dbReference>
<dbReference type="GO" id="GO:0005576">
    <property type="term" value="C:extracellular region"/>
    <property type="evidence" value="ECO:0007669"/>
    <property type="project" value="UniProtKB-KW"/>
</dbReference>
<dbReference type="GO" id="GO:0004650">
    <property type="term" value="F:polygalacturonase activity"/>
    <property type="evidence" value="ECO:0000314"/>
    <property type="project" value="TAIR"/>
</dbReference>
<dbReference type="GO" id="GO:0009901">
    <property type="term" value="P:anther dehiscence"/>
    <property type="evidence" value="ECO:0000315"/>
    <property type="project" value="TAIR"/>
</dbReference>
<dbReference type="GO" id="GO:0009830">
    <property type="term" value="P:cell wall modification involved in abscission"/>
    <property type="evidence" value="ECO:0000304"/>
    <property type="project" value="TAIR"/>
</dbReference>
<dbReference type="GO" id="GO:0010047">
    <property type="term" value="P:fruit dehiscence"/>
    <property type="evidence" value="ECO:0000315"/>
    <property type="project" value="TAIR"/>
</dbReference>
<dbReference type="GO" id="GO:0045490">
    <property type="term" value="P:pectin catabolic process"/>
    <property type="evidence" value="ECO:0000315"/>
    <property type="project" value="TAIR"/>
</dbReference>
<dbReference type="GO" id="GO:0048235">
    <property type="term" value="P:pollen sperm cell differentiation"/>
    <property type="evidence" value="ECO:0000315"/>
    <property type="project" value="TAIR"/>
</dbReference>
<dbReference type="FunFam" id="2.160.20.10:FF:000028">
    <property type="entry name" value="Polygalacturonase QRT2"/>
    <property type="match status" value="1"/>
</dbReference>
<dbReference type="Gene3D" id="2.160.20.10">
    <property type="entry name" value="Single-stranded right-handed beta-helix, Pectin lyase-like"/>
    <property type="match status" value="1"/>
</dbReference>
<dbReference type="InterPro" id="IPR000743">
    <property type="entry name" value="Glyco_hydro_28"/>
</dbReference>
<dbReference type="InterPro" id="IPR006626">
    <property type="entry name" value="PbH1"/>
</dbReference>
<dbReference type="InterPro" id="IPR012334">
    <property type="entry name" value="Pectin_lyas_fold"/>
</dbReference>
<dbReference type="InterPro" id="IPR011050">
    <property type="entry name" value="Pectin_lyase_fold/virulence"/>
</dbReference>
<dbReference type="PANTHER" id="PTHR31375">
    <property type="match status" value="1"/>
</dbReference>
<dbReference type="Pfam" id="PF00295">
    <property type="entry name" value="Glyco_hydro_28"/>
    <property type="match status" value="1"/>
</dbReference>
<dbReference type="SMART" id="SM00710">
    <property type="entry name" value="PbH1"/>
    <property type="match status" value="4"/>
</dbReference>
<dbReference type="SUPFAM" id="SSF51126">
    <property type="entry name" value="Pectin lyase-like"/>
    <property type="match status" value="1"/>
</dbReference>
<dbReference type="PROSITE" id="PS00502">
    <property type="entry name" value="POLYGALACTURONASE"/>
    <property type="match status" value="1"/>
</dbReference>
<name>QRT2_ARATH</name>